<organism>
    <name type="scientific">Salmonella arizonae (strain ATCC BAA-731 / CDC346-86 / RSK2980)</name>
    <dbReference type="NCBI Taxonomy" id="41514"/>
    <lineage>
        <taxon>Bacteria</taxon>
        <taxon>Pseudomonadati</taxon>
        <taxon>Pseudomonadota</taxon>
        <taxon>Gammaproteobacteria</taxon>
        <taxon>Enterobacterales</taxon>
        <taxon>Enterobacteriaceae</taxon>
        <taxon>Salmonella</taxon>
    </lineage>
</organism>
<protein>
    <recommendedName>
        <fullName evidence="1">Crotonobetaine/carnitine--CoA ligase</fullName>
        <ecNumber evidence="1">6.2.1.48</ecNumber>
    </recommendedName>
</protein>
<comment type="function">
    <text evidence="1">Catalyzes the transfer of CoA to carnitine, generating the initial carnitinyl-CoA needed for the CaiB reaction cycle. Also has activity toward crotonobetaine and gamma-butyrobetaine.</text>
</comment>
<comment type="catalytic activity">
    <reaction evidence="1">
        <text>4-(trimethylamino)butanoate + ATP + CoA = 4-(trimethylamino)butanoyl-CoA + AMP + diphosphate</text>
        <dbReference type="Rhea" id="RHEA:55960"/>
        <dbReference type="ChEBI" id="CHEBI:16244"/>
        <dbReference type="ChEBI" id="CHEBI:30616"/>
        <dbReference type="ChEBI" id="CHEBI:33019"/>
        <dbReference type="ChEBI" id="CHEBI:57287"/>
        <dbReference type="ChEBI" id="CHEBI:61513"/>
        <dbReference type="ChEBI" id="CHEBI:456215"/>
        <dbReference type="EC" id="6.2.1.48"/>
    </reaction>
</comment>
<comment type="catalytic activity">
    <reaction evidence="1">
        <text>crotonobetaine + ATP + CoA = crotonobetainyl-CoA + AMP + diphosphate</text>
        <dbReference type="Rhea" id="RHEA:30079"/>
        <dbReference type="ChEBI" id="CHEBI:17237"/>
        <dbReference type="ChEBI" id="CHEBI:30616"/>
        <dbReference type="ChEBI" id="CHEBI:33019"/>
        <dbReference type="ChEBI" id="CHEBI:57287"/>
        <dbReference type="ChEBI" id="CHEBI:60933"/>
        <dbReference type="ChEBI" id="CHEBI:456215"/>
        <dbReference type="EC" id="6.2.1.48"/>
    </reaction>
</comment>
<comment type="catalytic activity">
    <reaction evidence="1">
        <text>(R)-carnitine + ATP + CoA = (R)-carnitinyl-CoA + AMP + diphosphate</text>
        <dbReference type="Rhea" id="RHEA:28514"/>
        <dbReference type="ChEBI" id="CHEBI:16347"/>
        <dbReference type="ChEBI" id="CHEBI:30616"/>
        <dbReference type="ChEBI" id="CHEBI:33019"/>
        <dbReference type="ChEBI" id="CHEBI:57287"/>
        <dbReference type="ChEBI" id="CHEBI:60932"/>
        <dbReference type="ChEBI" id="CHEBI:456215"/>
        <dbReference type="EC" id="6.2.1.48"/>
    </reaction>
</comment>
<comment type="pathway">
    <text evidence="1">Amine and polyamine metabolism; carnitine metabolism.</text>
</comment>
<comment type="similarity">
    <text evidence="1">Belongs to the ATP-dependent AMP-binding enzyme family.</text>
</comment>
<accession>A9MQH7</accession>
<sequence length="517" mass="58568">MDIVGGQHLRQMWDDLAGIYEDKTALIFESCAGEVQHFSYASLNREINRTANLFYSLGIRKGDNVALHLDNCPEFIFCWFGLAKIGAIVVPINARLLREESAWILQNSRTSLLVTSAPFYPMYRQIQQEGRTPLSHICLIGPTLPAEEGVSHFYTLKAQQPDVLLYTPPLTPDDTAEILFTSGTTSRPKGVVITHYNLRFAGYYSSWQCALREDDVYLTVMPAFHIDCQCTAAMAAFSVGATFVLIEKYSARAFWGQVRKYCATVTECIPMMIRTLMTQTPAADDRHHCLREVMFYLNLSVQEKEAFTERFGVRLFTSYGMTETIVGIIGDRPGDKRRWPSIGRPGFCYEAEIRNEQNRALPPGEIGEICIKGIPGKTLFKSYFERPDATAKALEPNGWLHTGDSGYRDEEGFFYFVDRRCNMVKRGGENVSCVELENIIAGHPKIQDVVVIGIKDDIRDEAIKAFVVLNEGETLTEEDFFTFCEENMAKFKVPSYLEIREDLPRNCSGKIIKKNLK</sequence>
<name>CAIC_SALAR</name>
<keyword id="KW-0436">Ligase</keyword>
<keyword id="KW-1185">Reference proteome</keyword>
<dbReference type="EC" id="6.2.1.48" evidence="1"/>
<dbReference type="EMBL" id="CP000880">
    <property type="protein sequence ID" value="ABX22775.1"/>
    <property type="molecule type" value="Genomic_DNA"/>
</dbReference>
<dbReference type="SMR" id="A9MQH7"/>
<dbReference type="STRING" id="41514.SARI_02929"/>
<dbReference type="KEGG" id="ses:SARI_02929"/>
<dbReference type="HOGENOM" id="CLU_000022_59_0_6"/>
<dbReference type="UniPathway" id="UPA00117"/>
<dbReference type="Proteomes" id="UP000002084">
    <property type="component" value="Chromosome"/>
</dbReference>
<dbReference type="GO" id="GO:0051108">
    <property type="term" value="F:carnitine-CoA ligase activity"/>
    <property type="evidence" value="ECO:0007669"/>
    <property type="project" value="InterPro"/>
</dbReference>
<dbReference type="GO" id="GO:0051109">
    <property type="term" value="F:crotonobetaine-CoA ligase activity"/>
    <property type="evidence" value="ECO:0007669"/>
    <property type="project" value="InterPro"/>
</dbReference>
<dbReference type="GO" id="GO:0031956">
    <property type="term" value="F:medium-chain fatty acid-CoA ligase activity"/>
    <property type="evidence" value="ECO:0007669"/>
    <property type="project" value="TreeGrafter"/>
</dbReference>
<dbReference type="GO" id="GO:0009437">
    <property type="term" value="P:carnitine metabolic process"/>
    <property type="evidence" value="ECO:0007669"/>
    <property type="project" value="UniProtKB-UniRule"/>
</dbReference>
<dbReference type="GO" id="GO:0006631">
    <property type="term" value="P:fatty acid metabolic process"/>
    <property type="evidence" value="ECO:0007669"/>
    <property type="project" value="TreeGrafter"/>
</dbReference>
<dbReference type="CDD" id="cd05934">
    <property type="entry name" value="FACL_DitJ_like"/>
    <property type="match status" value="1"/>
</dbReference>
<dbReference type="FunFam" id="3.30.300.30:FF:000011">
    <property type="entry name" value="Crotonobetaine/carnitine--CoA ligase"/>
    <property type="match status" value="1"/>
</dbReference>
<dbReference type="Gene3D" id="3.30.300.30">
    <property type="match status" value="1"/>
</dbReference>
<dbReference type="Gene3D" id="3.40.50.12780">
    <property type="entry name" value="N-terminal domain of ligase-like"/>
    <property type="match status" value="1"/>
</dbReference>
<dbReference type="HAMAP" id="MF_01524">
    <property type="entry name" value="CaiC"/>
    <property type="match status" value="1"/>
</dbReference>
<dbReference type="InterPro" id="IPR025110">
    <property type="entry name" value="AMP-bd_C"/>
</dbReference>
<dbReference type="InterPro" id="IPR045851">
    <property type="entry name" value="AMP-bd_C_sf"/>
</dbReference>
<dbReference type="InterPro" id="IPR020845">
    <property type="entry name" value="AMP-binding_CS"/>
</dbReference>
<dbReference type="InterPro" id="IPR000873">
    <property type="entry name" value="AMP-dep_synth/lig_dom"/>
</dbReference>
<dbReference type="InterPro" id="IPR042099">
    <property type="entry name" value="ANL_N_sf"/>
</dbReference>
<dbReference type="InterPro" id="IPR023456">
    <property type="entry name" value="CaiC"/>
</dbReference>
<dbReference type="NCBIfam" id="NF005947">
    <property type="entry name" value="PRK08008.1"/>
    <property type="match status" value="1"/>
</dbReference>
<dbReference type="PANTHER" id="PTHR43201">
    <property type="entry name" value="ACYL-COA SYNTHETASE"/>
    <property type="match status" value="1"/>
</dbReference>
<dbReference type="PANTHER" id="PTHR43201:SF5">
    <property type="entry name" value="MEDIUM-CHAIN ACYL-COA LIGASE ACSF2, MITOCHONDRIAL"/>
    <property type="match status" value="1"/>
</dbReference>
<dbReference type="Pfam" id="PF00501">
    <property type="entry name" value="AMP-binding"/>
    <property type="match status" value="1"/>
</dbReference>
<dbReference type="Pfam" id="PF13193">
    <property type="entry name" value="AMP-binding_C"/>
    <property type="match status" value="1"/>
</dbReference>
<dbReference type="SUPFAM" id="SSF56801">
    <property type="entry name" value="Acetyl-CoA synthetase-like"/>
    <property type="match status" value="1"/>
</dbReference>
<dbReference type="PROSITE" id="PS00455">
    <property type="entry name" value="AMP_BINDING"/>
    <property type="match status" value="1"/>
</dbReference>
<gene>
    <name evidence="1" type="primary">caiC</name>
    <name type="ordered locus">SARI_02929</name>
</gene>
<evidence type="ECO:0000255" key="1">
    <source>
        <dbReference type="HAMAP-Rule" id="MF_01524"/>
    </source>
</evidence>
<proteinExistence type="inferred from homology"/>
<feature type="chain" id="PRO_1000087571" description="Crotonobetaine/carnitine--CoA ligase">
    <location>
        <begin position="1"/>
        <end position="517"/>
    </location>
</feature>
<reference key="1">
    <citation type="submission" date="2007-11" db="EMBL/GenBank/DDBJ databases">
        <authorList>
            <consortium name="The Salmonella enterica serovar Arizonae Genome Sequencing Project"/>
            <person name="McClelland M."/>
            <person name="Sanderson E.K."/>
            <person name="Porwollik S."/>
            <person name="Spieth J."/>
            <person name="Clifton W.S."/>
            <person name="Fulton R."/>
            <person name="Chunyan W."/>
            <person name="Wollam A."/>
            <person name="Shah N."/>
            <person name="Pepin K."/>
            <person name="Bhonagiri V."/>
            <person name="Nash W."/>
            <person name="Johnson M."/>
            <person name="Thiruvilangam P."/>
            <person name="Wilson R."/>
        </authorList>
    </citation>
    <scope>NUCLEOTIDE SEQUENCE [LARGE SCALE GENOMIC DNA]</scope>
    <source>
        <strain>ATCC BAA-731 / CDC346-86 / RSK2980</strain>
    </source>
</reference>